<comment type="similarity">
    <text evidence="1">Belongs to the DM7 family.</text>
</comment>
<accession>Q9W3L5</accession>
<accession>A9YJU0</accession>
<accession>A9YJU1</accession>
<accession>A9YJU2</accession>
<accession>A9YJU3</accession>
<accession>A9YJU7</accession>
<accession>A9YJU9</accession>
<accession>A9YJV0</accession>
<accession>Q8MTT0</accession>
<name>DM7A_DROME</name>
<dbReference type="EMBL" id="AE014298">
    <property type="protein sequence ID" value="AAF46310.3"/>
    <property type="molecule type" value="Genomic_DNA"/>
</dbReference>
<dbReference type="EMBL" id="AY075234">
    <property type="protein sequence ID" value="AAL68101.2"/>
    <property type="molecule type" value="mRNA"/>
</dbReference>
<dbReference type="EMBL" id="EU218023">
    <property type="protein sequence ID" value="ABW92929.1"/>
    <property type="molecule type" value="Genomic_DNA"/>
</dbReference>
<dbReference type="EMBL" id="EU218024">
    <property type="protein sequence ID" value="ABW92930.1"/>
    <property type="molecule type" value="Genomic_DNA"/>
</dbReference>
<dbReference type="EMBL" id="EU218025">
    <property type="protein sequence ID" value="ABW92931.1"/>
    <property type="molecule type" value="Genomic_DNA"/>
</dbReference>
<dbReference type="EMBL" id="EU218026">
    <property type="protein sequence ID" value="ABW92932.1"/>
    <property type="molecule type" value="Genomic_DNA"/>
</dbReference>
<dbReference type="EMBL" id="EU218027">
    <property type="protein sequence ID" value="ABW92933.1"/>
    <property type="molecule type" value="Genomic_DNA"/>
</dbReference>
<dbReference type="EMBL" id="EU218028">
    <property type="protein sequence ID" value="ABW92934.1"/>
    <property type="molecule type" value="Genomic_DNA"/>
</dbReference>
<dbReference type="EMBL" id="EU218029">
    <property type="protein sequence ID" value="ABW92935.1"/>
    <property type="molecule type" value="Genomic_DNA"/>
</dbReference>
<dbReference type="EMBL" id="EU218030">
    <property type="protein sequence ID" value="ABW92936.1"/>
    <property type="molecule type" value="Genomic_DNA"/>
</dbReference>
<dbReference type="EMBL" id="EU218031">
    <property type="protein sequence ID" value="ABW92937.1"/>
    <property type="molecule type" value="Genomic_DNA"/>
</dbReference>
<dbReference type="EMBL" id="EU218032">
    <property type="protein sequence ID" value="ABW92938.1"/>
    <property type="molecule type" value="Genomic_DNA"/>
</dbReference>
<dbReference type="EMBL" id="EU218033">
    <property type="protein sequence ID" value="ABW92939.1"/>
    <property type="molecule type" value="Genomic_DNA"/>
</dbReference>
<dbReference type="EMBL" id="EU218034">
    <property type="protein sequence ID" value="ABW92940.1"/>
    <property type="molecule type" value="Genomic_DNA"/>
</dbReference>
<dbReference type="RefSeq" id="NP_572431.2">
    <property type="nucleotide sequence ID" value="NM_132203.4"/>
</dbReference>
<dbReference type="SMR" id="Q9W3L5"/>
<dbReference type="IntAct" id="Q9W3L5">
    <property type="interactions" value="1"/>
</dbReference>
<dbReference type="PaxDb" id="7227-FBpp0071076"/>
<dbReference type="EnsemblMetazoa" id="FBtr0071124">
    <property type="protein sequence ID" value="FBpp0071076"/>
    <property type="gene ID" value="FBgn0029989"/>
</dbReference>
<dbReference type="GeneID" id="31720"/>
<dbReference type="KEGG" id="dme:Dmel_CG15333"/>
<dbReference type="UCSC" id="CG15333-RA">
    <property type="organism name" value="d. melanogaster"/>
</dbReference>
<dbReference type="AGR" id="FB:FBgn0029989"/>
<dbReference type="FlyBase" id="FBgn0029989">
    <property type="gene designation" value="CG15333"/>
</dbReference>
<dbReference type="VEuPathDB" id="VectorBase:FBgn0029989"/>
<dbReference type="eggNOG" id="ENOG502QRB1">
    <property type="taxonomic scope" value="Eukaryota"/>
</dbReference>
<dbReference type="GeneTree" id="ENSGT00540000073740"/>
<dbReference type="HOGENOM" id="CLU_477581_0_0_1"/>
<dbReference type="InParanoid" id="Q9W3L5"/>
<dbReference type="OMA" id="KICREEP"/>
<dbReference type="OrthoDB" id="7867651at2759"/>
<dbReference type="PhylomeDB" id="Q9W3L5"/>
<dbReference type="BioGRID-ORCS" id="31720">
    <property type="hits" value="0 hits in 1 CRISPR screen"/>
</dbReference>
<dbReference type="GenomeRNAi" id="31720"/>
<dbReference type="PRO" id="PR:Q9W3L5"/>
<dbReference type="Proteomes" id="UP000000803">
    <property type="component" value="Chromosome X"/>
</dbReference>
<dbReference type="Bgee" id="FBgn0029989">
    <property type="expression patterns" value="Expressed in early-mid elongation-stage spermatid (Drosophila) in testis and 17 other cell types or tissues"/>
</dbReference>
<dbReference type="ExpressionAtlas" id="Q9W3L5">
    <property type="expression patterns" value="baseline and differential"/>
</dbReference>
<dbReference type="InterPro" id="IPR006610">
    <property type="entry name" value="DM7"/>
</dbReference>
<dbReference type="SMART" id="SM00688">
    <property type="entry name" value="DM7"/>
    <property type="match status" value="2"/>
</dbReference>
<evidence type="ECO:0000255" key="1"/>
<evidence type="ECO:0000269" key="2">
    <source>
    </source>
</evidence>
<evidence type="ECO:0000269" key="3">
    <source>
    </source>
</evidence>
<evidence type="ECO:0000305" key="4"/>
<evidence type="ECO:0000312" key="5">
    <source>
        <dbReference type="EMBL" id="AAF46310.3"/>
    </source>
</evidence>
<evidence type="ECO:0000312" key="6">
    <source>
        <dbReference type="EMBL" id="AAL68101.2"/>
    </source>
</evidence>
<evidence type="ECO:0000312" key="7">
    <source>
        <dbReference type="EMBL" id="ABW92929.1"/>
    </source>
</evidence>
<evidence type="ECO:0000312" key="8">
    <source>
        <dbReference type="EMBL" id="ABW92930.1"/>
    </source>
</evidence>
<evidence type="ECO:0000312" key="9">
    <source>
        <dbReference type="EMBL" id="ABW92931.1"/>
    </source>
</evidence>
<evidence type="ECO:0000312" key="10">
    <source>
        <dbReference type="EMBL" id="ABW92932.1"/>
    </source>
</evidence>
<evidence type="ECO:0000312" key="11">
    <source>
        <dbReference type="EMBL" id="ABW92933.1"/>
    </source>
</evidence>
<evidence type="ECO:0000312" key="12">
    <source>
        <dbReference type="EMBL" id="ABW92934.1"/>
    </source>
</evidence>
<evidence type="ECO:0000312" key="13">
    <source>
        <dbReference type="EMBL" id="ABW92935.1"/>
    </source>
</evidence>
<evidence type="ECO:0000312" key="14">
    <source>
        <dbReference type="EMBL" id="ABW92936.1"/>
    </source>
</evidence>
<evidence type="ECO:0000312" key="15">
    <source>
        <dbReference type="EMBL" id="ABW92937.1"/>
    </source>
</evidence>
<evidence type="ECO:0000312" key="16">
    <source>
        <dbReference type="EMBL" id="ABW92938.1"/>
    </source>
</evidence>
<evidence type="ECO:0000312" key="17">
    <source>
        <dbReference type="EMBL" id="ABW92939.1"/>
    </source>
</evidence>
<evidence type="ECO:0000312" key="18">
    <source>
        <dbReference type="EMBL" id="ABW92940.1"/>
    </source>
</evidence>
<organism>
    <name type="scientific">Drosophila melanogaster</name>
    <name type="common">Fruit fly</name>
    <dbReference type="NCBI Taxonomy" id="7227"/>
    <lineage>
        <taxon>Eukaryota</taxon>
        <taxon>Metazoa</taxon>
        <taxon>Ecdysozoa</taxon>
        <taxon>Arthropoda</taxon>
        <taxon>Hexapoda</taxon>
        <taxon>Insecta</taxon>
        <taxon>Pterygota</taxon>
        <taxon>Neoptera</taxon>
        <taxon>Endopterygota</taxon>
        <taxon>Diptera</taxon>
        <taxon>Brachycera</taxon>
        <taxon>Muscomorpha</taxon>
        <taxon>Ephydroidea</taxon>
        <taxon>Drosophilidae</taxon>
        <taxon>Drosophila</taxon>
        <taxon>Sophophora</taxon>
    </lineage>
</organism>
<proteinExistence type="evidence at transcript level"/>
<keyword id="KW-1185">Reference proteome</keyword>
<keyword id="KW-0677">Repeat</keyword>
<reference evidence="5" key="1">
    <citation type="journal article" date="2000" name="Science">
        <title>The genome sequence of Drosophila melanogaster.</title>
        <authorList>
            <person name="Adams M.D."/>
            <person name="Celniker S.E."/>
            <person name="Holt R.A."/>
            <person name="Evans C.A."/>
            <person name="Gocayne J.D."/>
            <person name="Amanatides P.G."/>
            <person name="Scherer S.E."/>
            <person name="Li P.W."/>
            <person name="Hoskins R.A."/>
            <person name="Galle R.F."/>
            <person name="George R.A."/>
            <person name="Lewis S.E."/>
            <person name="Richards S."/>
            <person name="Ashburner M."/>
            <person name="Henderson S.N."/>
            <person name="Sutton G.G."/>
            <person name="Wortman J.R."/>
            <person name="Yandell M.D."/>
            <person name="Zhang Q."/>
            <person name="Chen L.X."/>
            <person name="Brandon R.C."/>
            <person name="Rogers Y.-H.C."/>
            <person name="Blazej R.G."/>
            <person name="Champe M."/>
            <person name="Pfeiffer B.D."/>
            <person name="Wan K.H."/>
            <person name="Doyle C."/>
            <person name="Baxter E.G."/>
            <person name="Helt G."/>
            <person name="Nelson C.R."/>
            <person name="Miklos G.L.G."/>
            <person name="Abril J.F."/>
            <person name="Agbayani A."/>
            <person name="An H.-J."/>
            <person name="Andrews-Pfannkoch C."/>
            <person name="Baldwin D."/>
            <person name="Ballew R.M."/>
            <person name="Basu A."/>
            <person name="Baxendale J."/>
            <person name="Bayraktaroglu L."/>
            <person name="Beasley E.M."/>
            <person name="Beeson K.Y."/>
            <person name="Benos P.V."/>
            <person name="Berman B.P."/>
            <person name="Bhandari D."/>
            <person name="Bolshakov S."/>
            <person name="Borkova D."/>
            <person name="Botchan M.R."/>
            <person name="Bouck J."/>
            <person name="Brokstein P."/>
            <person name="Brottier P."/>
            <person name="Burtis K.C."/>
            <person name="Busam D.A."/>
            <person name="Butler H."/>
            <person name="Cadieu E."/>
            <person name="Center A."/>
            <person name="Chandra I."/>
            <person name="Cherry J.M."/>
            <person name="Cawley S."/>
            <person name="Dahlke C."/>
            <person name="Davenport L.B."/>
            <person name="Davies P."/>
            <person name="de Pablos B."/>
            <person name="Delcher A."/>
            <person name="Deng Z."/>
            <person name="Mays A.D."/>
            <person name="Dew I."/>
            <person name="Dietz S.M."/>
            <person name="Dodson K."/>
            <person name="Doup L.E."/>
            <person name="Downes M."/>
            <person name="Dugan-Rocha S."/>
            <person name="Dunkov B.C."/>
            <person name="Dunn P."/>
            <person name="Durbin K.J."/>
            <person name="Evangelista C.C."/>
            <person name="Ferraz C."/>
            <person name="Ferriera S."/>
            <person name="Fleischmann W."/>
            <person name="Fosler C."/>
            <person name="Gabrielian A.E."/>
            <person name="Garg N.S."/>
            <person name="Gelbart W.M."/>
            <person name="Glasser K."/>
            <person name="Glodek A."/>
            <person name="Gong F."/>
            <person name="Gorrell J.H."/>
            <person name="Gu Z."/>
            <person name="Guan P."/>
            <person name="Harris M."/>
            <person name="Harris N.L."/>
            <person name="Harvey D.A."/>
            <person name="Heiman T.J."/>
            <person name="Hernandez J.R."/>
            <person name="Houck J."/>
            <person name="Hostin D."/>
            <person name="Houston K.A."/>
            <person name="Howland T.J."/>
            <person name="Wei M.-H."/>
            <person name="Ibegwam C."/>
            <person name="Jalali M."/>
            <person name="Kalush F."/>
            <person name="Karpen G.H."/>
            <person name="Ke Z."/>
            <person name="Kennison J.A."/>
            <person name="Ketchum K.A."/>
            <person name="Kimmel B.E."/>
            <person name="Kodira C.D."/>
            <person name="Kraft C.L."/>
            <person name="Kravitz S."/>
            <person name="Kulp D."/>
            <person name="Lai Z."/>
            <person name="Lasko P."/>
            <person name="Lei Y."/>
            <person name="Levitsky A.A."/>
            <person name="Li J.H."/>
            <person name="Li Z."/>
            <person name="Liang Y."/>
            <person name="Lin X."/>
            <person name="Liu X."/>
            <person name="Mattei B."/>
            <person name="McIntosh T.C."/>
            <person name="McLeod M.P."/>
            <person name="McPherson D."/>
            <person name="Merkulov G."/>
            <person name="Milshina N.V."/>
            <person name="Mobarry C."/>
            <person name="Morris J."/>
            <person name="Moshrefi A."/>
            <person name="Mount S.M."/>
            <person name="Moy M."/>
            <person name="Murphy B."/>
            <person name="Murphy L."/>
            <person name="Muzny D.M."/>
            <person name="Nelson D.L."/>
            <person name="Nelson D.R."/>
            <person name="Nelson K.A."/>
            <person name="Nixon K."/>
            <person name="Nusskern D.R."/>
            <person name="Pacleb J.M."/>
            <person name="Palazzolo M."/>
            <person name="Pittman G.S."/>
            <person name="Pan S."/>
            <person name="Pollard J."/>
            <person name="Puri V."/>
            <person name="Reese M.G."/>
            <person name="Reinert K."/>
            <person name="Remington K."/>
            <person name="Saunders R.D.C."/>
            <person name="Scheeler F."/>
            <person name="Shen H."/>
            <person name="Shue B.C."/>
            <person name="Siden-Kiamos I."/>
            <person name="Simpson M."/>
            <person name="Skupski M.P."/>
            <person name="Smith T.J."/>
            <person name="Spier E."/>
            <person name="Spradling A.C."/>
            <person name="Stapleton M."/>
            <person name="Strong R."/>
            <person name="Sun E."/>
            <person name="Svirskas R."/>
            <person name="Tector C."/>
            <person name="Turner R."/>
            <person name="Venter E."/>
            <person name="Wang A.H."/>
            <person name="Wang X."/>
            <person name="Wang Z.-Y."/>
            <person name="Wassarman D.A."/>
            <person name="Weinstock G.M."/>
            <person name="Weissenbach J."/>
            <person name="Williams S.M."/>
            <person name="Woodage T."/>
            <person name="Worley K.C."/>
            <person name="Wu D."/>
            <person name="Yang S."/>
            <person name="Yao Q.A."/>
            <person name="Ye J."/>
            <person name="Yeh R.-F."/>
            <person name="Zaveri J.S."/>
            <person name="Zhan M."/>
            <person name="Zhang G."/>
            <person name="Zhao Q."/>
            <person name="Zheng L."/>
            <person name="Zheng X.H."/>
            <person name="Zhong F.N."/>
            <person name="Zhong W."/>
            <person name="Zhou X."/>
            <person name="Zhu S.C."/>
            <person name="Zhu X."/>
            <person name="Smith H.O."/>
            <person name="Gibbs R.A."/>
            <person name="Myers E.W."/>
            <person name="Rubin G.M."/>
            <person name="Venter J.C."/>
        </authorList>
    </citation>
    <scope>NUCLEOTIDE SEQUENCE [LARGE SCALE GENOMIC DNA]</scope>
    <source>
        <strain>Berkeley</strain>
    </source>
</reference>
<reference evidence="4 5" key="2">
    <citation type="journal article" date="2002" name="Genome Biol.">
        <title>Annotation of the Drosophila melanogaster euchromatic genome: a systematic review.</title>
        <authorList>
            <person name="Misra S."/>
            <person name="Crosby M.A."/>
            <person name="Mungall C.J."/>
            <person name="Matthews B.B."/>
            <person name="Campbell K.S."/>
            <person name="Hradecky P."/>
            <person name="Huang Y."/>
            <person name="Kaminker J.S."/>
            <person name="Millburn G.H."/>
            <person name="Prochnik S.E."/>
            <person name="Smith C.D."/>
            <person name="Tupy J.L."/>
            <person name="Whitfield E.J."/>
            <person name="Bayraktaroglu L."/>
            <person name="Berman B.P."/>
            <person name="Bettencourt B.R."/>
            <person name="Celniker S.E."/>
            <person name="de Grey A.D.N.J."/>
            <person name="Drysdale R.A."/>
            <person name="Harris N.L."/>
            <person name="Richter J."/>
            <person name="Russo S."/>
            <person name="Schroeder A.J."/>
            <person name="Shu S.Q."/>
            <person name="Stapleton M."/>
            <person name="Yamada C."/>
            <person name="Ashburner M."/>
            <person name="Gelbart W.M."/>
            <person name="Rubin G.M."/>
            <person name="Lewis S.E."/>
        </authorList>
    </citation>
    <scope>GENOME REANNOTATION</scope>
    <source>
        <strain>Berkeley</strain>
    </source>
</reference>
<reference evidence="4 6" key="3">
    <citation type="journal article" date="2002" name="Genome Biol.">
        <title>A Drosophila full-length cDNA resource.</title>
        <authorList>
            <person name="Stapleton M."/>
            <person name="Carlson J.W."/>
            <person name="Brokstein P."/>
            <person name="Yu C."/>
            <person name="Champe M."/>
            <person name="George R.A."/>
            <person name="Guarin H."/>
            <person name="Kronmiller B."/>
            <person name="Pacleb J.M."/>
            <person name="Park S."/>
            <person name="Wan K.H."/>
            <person name="Rubin G.M."/>
            <person name="Celniker S.E."/>
        </authorList>
    </citation>
    <scope>NUCLEOTIDE SEQUENCE [LARGE SCALE MRNA] OF 2-542</scope>
    <source>
        <strain evidence="2">Berkeley</strain>
        <tissue evidence="2">Testis</tissue>
    </source>
</reference>
<reference evidence="4 9" key="4">
    <citation type="journal article" date="2007" name="Genome Res.">
        <title>Hitchhiking effects of recurrent beneficial amino acid substitutions in the Drosophila melanogaster genome.</title>
        <authorList>
            <person name="Andolfatto P."/>
        </authorList>
    </citation>
    <scope>NUCLEOTIDE SEQUENCE [GENOMIC DNA] OF 189-412</scope>
    <scope>VARIANTS GLU-252; LYS-262; ASN-262; GLY-268 AND LYS-332</scope>
    <source>
        <strain evidence="7">ZW104</strain>
        <strain evidence="8">ZW106</strain>
        <strain evidence="9">ZW109</strain>
        <strain evidence="10">ZW122</strain>
        <strain evidence="11">ZW123</strain>
        <strain evidence="12">ZW133</strain>
        <strain evidence="13">ZW136</strain>
        <strain evidence="14">ZW139</strain>
        <strain evidence="15">ZW140</strain>
        <strain evidence="16">ZW141</strain>
        <strain evidence="17">ZW142</strain>
        <strain evidence="18">ZW143</strain>
    </source>
</reference>
<gene>
    <name type="ORF">CG15333</name>
</gene>
<protein>
    <recommendedName>
        <fullName>DM7 family protein CG15333</fullName>
    </recommendedName>
</protein>
<sequence>MDTVHRDKDQVVILKKANYLPYLVNLFIPKLFYPEKIVVARLYLDVNKHDKQAAENFEGTETPCFDVPPSLFADKVPMDKIVFLPTSMLPMGFEAGGVFGPGILTRRSYPIDLKAAGHKGQTPPLFVGLRMEVQPPTRVESLLKKDGESQPIQDTLMNWLHASNDLINGAQPKGQELRDEFSLSMVFNLPIPPSPPSPYSYGRIPLQCNIYTPDLSNVLLLMSHQRDLTVAILSTVNNPHVPSVAFATMGDDAECPKFELPIGVFPICEGVNRPIFLPKRFMPKGFEAGCVIKPGTLSELWFMDYIGRFGPPQPQYNGSITPPLFVGKICREEPAVDMIKKIQFEIEKKASDDAESKATLAGVKPKFDISITKGFMVMETKEPKSPKGAYSVQNYDEAFDDGCIVRVVKKPATAEEATETRERNEMCTVGDQSQELDKCSTEADQKYLSCFHVDSDIDNIAMAMARLGIADMSLHADEEELCGIDGDNALIQLRHVLEDRNQIRSHTDQLMQDHIFRMNRDRMLALRQPFTCFGCGIHEKKQ</sequence>
<feature type="chain" id="PRO_0000378603" description="DM7 family protein CG15333">
    <location>
        <begin position="1"/>
        <end position="542"/>
    </location>
</feature>
<feature type="sequence variant" description="In strain: ZW141 and ZW142." evidence="3">
    <original>D</original>
    <variation>E</variation>
    <location>
        <position position="252"/>
    </location>
</feature>
<feature type="sequence variant" description="In strain: ZW106 and ZW133." evidence="3">
    <original>I</original>
    <variation>K</variation>
    <location>
        <position position="262"/>
    </location>
</feature>
<feature type="sequence variant" description="In strain: ZW104, ZW141 and ZW143." evidence="3">
    <original>I</original>
    <variation>N</variation>
    <location>
        <position position="262"/>
    </location>
</feature>
<feature type="sequence variant" description="In strain: ZW104, ZW106, ZW122, ZW133, ZW136, ZW139, ZW140, ZW141, ZW142 and ZW143." evidence="3">
    <original>C</original>
    <variation>G</variation>
    <location>
        <position position="268"/>
    </location>
</feature>
<feature type="sequence variant" description="In strain: ZW122 and ZW136." evidence="3">
    <original>E</original>
    <variation>K</variation>
    <location>
        <position position="332"/>
    </location>
</feature>